<evidence type="ECO:0000250" key="1"/>
<evidence type="ECO:0000250" key="2">
    <source>
        <dbReference type="UniProtKB" id="O60763"/>
    </source>
</evidence>
<evidence type="ECO:0000250" key="3">
    <source>
        <dbReference type="UniProtKB" id="P41542"/>
    </source>
</evidence>
<evidence type="ECO:0000255" key="4"/>
<evidence type="ECO:0000256" key="5">
    <source>
        <dbReference type="SAM" id="MobiDB-lite"/>
    </source>
</evidence>
<evidence type="ECO:0000303" key="6">
    <source>
    </source>
</evidence>
<evidence type="ECO:0000305" key="7"/>
<evidence type="ECO:0007744" key="8">
    <source>
    </source>
</evidence>
<evidence type="ECO:0007744" key="9">
    <source>
    </source>
</evidence>
<reference key="1">
    <citation type="journal article" date="2005" name="Science">
        <title>The transcriptional landscape of the mammalian genome.</title>
        <authorList>
            <person name="Carninci P."/>
            <person name="Kasukawa T."/>
            <person name="Katayama S."/>
            <person name="Gough J."/>
            <person name="Frith M.C."/>
            <person name="Maeda N."/>
            <person name="Oyama R."/>
            <person name="Ravasi T."/>
            <person name="Lenhard B."/>
            <person name="Wells C."/>
            <person name="Kodzius R."/>
            <person name="Shimokawa K."/>
            <person name="Bajic V.B."/>
            <person name="Brenner S.E."/>
            <person name="Batalov S."/>
            <person name="Forrest A.R."/>
            <person name="Zavolan M."/>
            <person name="Davis M.J."/>
            <person name="Wilming L.G."/>
            <person name="Aidinis V."/>
            <person name="Allen J.E."/>
            <person name="Ambesi-Impiombato A."/>
            <person name="Apweiler R."/>
            <person name="Aturaliya R.N."/>
            <person name="Bailey T.L."/>
            <person name="Bansal M."/>
            <person name="Baxter L."/>
            <person name="Beisel K.W."/>
            <person name="Bersano T."/>
            <person name="Bono H."/>
            <person name="Chalk A.M."/>
            <person name="Chiu K.P."/>
            <person name="Choudhary V."/>
            <person name="Christoffels A."/>
            <person name="Clutterbuck D.R."/>
            <person name="Crowe M.L."/>
            <person name="Dalla E."/>
            <person name="Dalrymple B.P."/>
            <person name="de Bono B."/>
            <person name="Della Gatta G."/>
            <person name="di Bernardo D."/>
            <person name="Down T."/>
            <person name="Engstrom P."/>
            <person name="Fagiolini M."/>
            <person name="Faulkner G."/>
            <person name="Fletcher C.F."/>
            <person name="Fukushima T."/>
            <person name="Furuno M."/>
            <person name="Futaki S."/>
            <person name="Gariboldi M."/>
            <person name="Georgii-Hemming P."/>
            <person name="Gingeras T.R."/>
            <person name="Gojobori T."/>
            <person name="Green R.E."/>
            <person name="Gustincich S."/>
            <person name="Harbers M."/>
            <person name="Hayashi Y."/>
            <person name="Hensch T.K."/>
            <person name="Hirokawa N."/>
            <person name="Hill D."/>
            <person name="Huminiecki L."/>
            <person name="Iacono M."/>
            <person name="Ikeo K."/>
            <person name="Iwama A."/>
            <person name="Ishikawa T."/>
            <person name="Jakt M."/>
            <person name="Kanapin A."/>
            <person name="Katoh M."/>
            <person name="Kawasawa Y."/>
            <person name="Kelso J."/>
            <person name="Kitamura H."/>
            <person name="Kitano H."/>
            <person name="Kollias G."/>
            <person name="Krishnan S.P."/>
            <person name="Kruger A."/>
            <person name="Kummerfeld S.K."/>
            <person name="Kurochkin I.V."/>
            <person name="Lareau L.F."/>
            <person name="Lazarevic D."/>
            <person name="Lipovich L."/>
            <person name="Liu J."/>
            <person name="Liuni S."/>
            <person name="McWilliam S."/>
            <person name="Madan Babu M."/>
            <person name="Madera M."/>
            <person name="Marchionni L."/>
            <person name="Matsuda H."/>
            <person name="Matsuzawa S."/>
            <person name="Miki H."/>
            <person name="Mignone F."/>
            <person name="Miyake S."/>
            <person name="Morris K."/>
            <person name="Mottagui-Tabar S."/>
            <person name="Mulder N."/>
            <person name="Nakano N."/>
            <person name="Nakauchi H."/>
            <person name="Ng P."/>
            <person name="Nilsson R."/>
            <person name="Nishiguchi S."/>
            <person name="Nishikawa S."/>
            <person name="Nori F."/>
            <person name="Ohara O."/>
            <person name="Okazaki Y."/>
            <person name="Orlando V."/>
            <person name="Pang K.C."/>
            <person name="Pavan W.J."/>
            <person name="Pavesi G."/>
            <person name="Pesole G."/>
            <person name="Petrovsky N."/>
            <person name="Piazza S."/>
            <person name="Reed J."/>
            <person name="Reid J.F."/>
            <person name="Ring B.Z."/>
            <person name="Ringwald M."/>
            <person name="Rost B."/>
            <person name="Ruan Y."/>
            <person name="Salzberg S.L."/>
            <person name="Sandelin A."/>
            <person name="Schneider C."/>
            <person name="Schoenbach C."/>
            <person name="Sekiguchi K."/>
            <person name="Semple C.A."/>
            <person name="Seno S."/>
            <person name="Sessa L."/>
            <person name="Sheng Y."/>
            <person name="Shibata Y."/>
            <person name="Shimada H."/>
            <person name="Shimada K."/>
            <person name="Silva D."/>
            <person name="Sinclair B."/>
            <person name="Sperling S."/>
            <person name="Stupka E."/>
            <person name="Sugiura K."/>
            <person name="Sultana R."/>
            <person name="Takenaka Y."/>
            <person name="Taki K."/>
            <person name="Tammoja K."/>
            <person name="Tan S.L."/>
            <person name="Tang S."/>
            <person name="Taylor M.S."/>
            <person name="Tegner J."/>
            <person name="Teichmann S.A."/>
            <person name="Ueda H.R."/>
            <person name="van Nimwegen E."/>
            <person name="Verardo R."/>
            <person name="Wei C.L."/>
            <person name="Yagi K."/>
            <person name="Yamanishi H."/>
            <person name="Zabarovsky E."/>
            <person name="Zhu S."/>
            <person name="Zimmer A."/>
            <person name="Hide W."/>
            <person name="Bult C."/>
            <person name="Grimmond S.M."/>
            <person name="Teasdale R.D."/>
            <person name="Liu E.T."/>
            <person name="Brusic V."/>
            <person name="Quackenbush J."/>
            <person name="Wahlestedt C."/>
            <person name="Mattick J.S."/>
            <person name="Hume D.A."/>
            <person name="Kai C."/>
            <person name="Sasaki D."/>
            <person name="Tomaru Y."/>
            <person name="Fukuda S."/>
            <person name="Kanamori-Katayama M."/>
            <person name="Suzuki M."/>
            <person name="Aoki J."/>
            <person name="Arakawa T."/>
            <person name="Iida J."/>
            <person name="Imamura K."/>
            <person name="Itoh M."/>
            <person name="Kato T."/>
            <person name="Kawaji H."/>
            <person name="Kawagashira N."/>
            <person name="Kawashima T."/>
            <person name="Kojima M."/>
            <person name="Kondo S."/>
            <person name="Konno H."/>
            <person name="Nakano K."/>
            <person name="Ninomiya N."/>
            <person name="Nishio T."/>
            <person name="Okada M."/>
            <person name="Plessy C."/>
            <person name="Shibata K."/>
            <person name="Shiraki T."/>
            <person name="Suzuki S."/>
            <person name="Tagami M."/>
            <person name="Waki K."/>
            <person name="Watahiki A."/>
            <person name="Okamura-Oho Y."/>
            <person name="Suzuki H."/>
            <person name="Kawai J."/>
            <person name="Hayashizaki Y."/>
        </authorList>
    </citation>
    <scope>NUCLEOTIDE SEQUENCE [LARGE SCALE MRNA] (ISOFORMS 2; 3 AND 4)</scope>
    <source>
        <strain>C57BL/6J</strain>
        <strain>NOD</strain>
        <tissue>Liver</tissue>
        <tissue>Lung</tissue>
        <tissue>Spleen</tissue>
    </source>
</reference>
<reference key="2">
    <citation type="journal article" date="2004" name="Genome Res.">
        <title>The status, quality, and expansion of the NIH full-length cDNA project: the Mammalian Gene Collection (MGC).</title>
        <authorList>
            <consortium name="The MGC Project Team"/>
        </authorList>
    </citation>
    <scope>NUCLEOTIDE SEQUENCE [LARGE SCALE MRNA] (ISOFORM 1)</scope>
    <source>
        <strain>FVB/N</strain>
        <tissue>Eye</tissue>
        <tissue>Mammary tumor</tissue>
    </source>
</reference>
<reference key="3">
    <citation type="submission" date="1998-10" db="EMBL/GenBank/DDBJ databases">
        <title>Identification of mouse TAP (transcytosis associated protein/p115).</title>
        <authorList>
            <person name="Han S.J."/>
        </authorList>
    </citation>
    <scope>NUCLEOTIDE SEQUENCE [MRNA] OF 19-959 (ISOFORM 1)</scope>
    <source>
        <strain>129</strain>
        <tissue>Thymus</tissue>
    </source>
</reference>
<reference key="4">
    <citation type="journal article" date="2007" name="Proc. Natl. Acad. Sci. U.S.A.">
        <title>Large-scale phosphorylation analysis of mouse liver.</title>
        <authorList>
            <person name="Villen J."/>
            <person name="Beausoleil S.A."/>
            <person name="Gerber S.A."/>
            <person name="Gygi S.P."/>
        </authorList>
    </citation>
    <scope>PHOSPHORYLATION [LARGE SCALE ANALYSIS] AT SER-940</scope>
    <scope>IDENTIFICATION BY MASS SPECTROMETRY [LARGE SCALE ANALYSIS]</scope>
    <source>
        <tissue>Liver</tissue>
    </source>
</reference>
<reference key="5">
    <citation type="journal article" date="2010" name="Cell">
        <title>A tissue-specific atlas of mouse protein phosphorylation and expression.</title>
        <authorList>
            <person name="Huttlin E.L."/>
            <person name="Jedrychowski M.P."/>
            <person name="Elias J.E."/>
            <person name="Goswami T."/>
            <person name="Rad R."/>
            <person name="Beausoleil S.A."/>
            <person name="Villen J."/>
            <person name="Haas W."/>
            <person name="Sowa M.E."/>
            <person name="Gygi S.P."/>
        </authorList>
    </citation>
    <scope>PHOSPHORYLATION [LARGE SCALE ANALYSIS] AT SER-940</scope>
    <scope>IDENTIFICATION BY MASS SPECTROMETRY [LARGE SCALE ANALYSIS]</scope>
    <source>
        <tissue>Brain</tissue>
        <tissue>Brown adipose tissue</tissue>
        <tissue>Heart</tissue>
        <tissue>Kidney</tissue>
        <tissue>Liver</tissue>
        <tissue>Lung</tissue>
        <tissue>Pancreas</tissue>
        <tissue>Spleen</tissue>
        <tissue>Testis</tissue>
    </source>
</reference>
<sequence length="959" mass="106983">MNFLRGVMGGQSAGPQHTEAETIQKLCDRVASSTLLDDRRNAVRALKSLSKKYRLEVGIQAMEHLIHVLQTDRSDSEIIAYALDTLYNIISNDEEEELEENSTRQSEDLGSQFTEIFIKQPENVTLLLSLLEEFDFHVRWPGVRLLTSLLKQLGPPVQQIILVSPMGVSRLMDLLADSREIIRNDGVLLLQALTRSNGAIQKIVAFENAFERLLDIITEEGNSDGGIVVEDCLILLQNLLKTNNSNQNFFKEGSYIQRMKPWFEVGEENSGWSAQKVTNLHLMLQLVRVLVSPTNPPGATSSCQKAMFQCGLLQQLCTILMATGIPADILTETINTVSEVIRGCQVNQDYFASVNAPSNPPRPAIVVLLMSMVNERQPFVLRCAVLYCFQCFLYKNEKGQGEIVATLLPSTIDATGNSVSAGQLLCGGLFSTDSLSNWCAAVALAHALQGNATQKEQLLRVQLATSIGNPPVSLLQQCTNILSQGSKIQTRVGLLMLLCTWLSNCPIAVTHFLHNSANVPFLTGQIAENLGEEEQLVQGLCALLLGISIYFNDNSLENYTKEKLKQLIEKRIGKENFIEKLGFISKHELYSRASQKPQPNFPSPEYMIFDHEFTKLVKELEGVITKAIYKSSEEDKKEEEVKKTLEQHDNIVTHYKNMIREQDLQLEELKQQVSTLKCQNEQLQTAVTQQASQIQQHKDQYNLLKVQLGKDNHHQGSHGDGAQVNGIQPEEISRLREEIEELKSQQALLQGQLAEKDSLIENLKSSQASGMSEQASATCPPRDPEQVAELKQELTALKSQLCSQSLEITRLQTENCELLQRAETLAKSVPVEGESEHVSAAKTTDVEGRLSALLQETKELKNEIKALSEERTAIQKQLDSSNSTIAILQTEKDKLDLEVTDSKKEQDDLLVLLADQDQKILSLKSKLKDLGHPVEEEDESGDQEDDDDEIDDGDKDQDI</sequence>
<protein>
    <recommendedName>
        <fullName>General vesicular transport factor p115</fullName>
    </recommendedName>
    <alternativeName>
        <fullName>Protein USO1 homolog</fullName>
    </alternativeName>
    <alternativeName>
        <fullName>Transcytosis-associated protein</fullName>
        <shortName>TAP</shortName>
    </alternativeName>
    <alternativeName>
        <fullName>Vesicle-docking protein</fullName>
    </alternativeName>
</protein>
<proteinExistence type="evidence at protein level"/>
<name>USO1_MOUSE</name>
<keyword id="KW-0007">Acetylation</keyword>
<keyword id="KW-0025">Alternative splicing</keyword>
<keyword id="KW-0175">Coiled coil</keyword>
<keyword id="KW-0963">Cytoplasm</keyword>
<keyword id="KW-0931">ER-Golgi transport</keyword>
<keyword id="KW-0333">Golgi apparatus</keyword>
<keyword id="KW-0472">Membrane</keyword>
<keyword id="KW-0597">Phosphoprotein</keyword>
<keyword id="KW-0653">Protein transport</keyword>
<keyword id="KW-1185">Reference proteome</keyword>
<keyword id="KW-0677">Repeat</keyword>
<keyword id="KW-0813">Transport</keyword>
<feature type="chain" id="PRO_0000065775" description="General vesicular transport factor p115">
    <location>
        <begin position="1"/>
        <end position="959"/>
    </location>
</feature>
<feature type="repeat" description="ARM 1">
    <location>
        <begin position="20"/>
        <end position="60"/>
    </location>
</feature>
<feature type="repeat" description="ARM 2">
    <location>
        <begin position="61"/>
        <end position="121"/>
    </location>
</feature>
<feature type="repeat" description="ARM 3">
    <location>
        <begin position="123"/>
        <end position="163"/>
    </location>
</feature>
<feature type="repeat" description="ARM 4">
    <location>
        <begin position="166"/>
        <end position="207"/>
    </location>
</feature>
<feature type="repeat" description="ARM 5">
    <location>
        <begin position="208"/>
        <end position="253"/>
    </location>
</feature>
<feature type="repeat" description="ARM 6">
    <location>
        <begin position="255"/>
        <end position="310"/>
    </location>
</feature>
<feature type="repeat" description="ARM 7">
    <location>
        <begin position="311"/>
        <end position="354"/>
    </location>
</feature>
<feature type="repeat" description="ARM 8">
    <location>
        <begin position="363"/>
        <end position="408"/>
    </location>
</feature>
<feature type="repeat" description="ARM 9">
    <location>
        <begin position="420"/>
        <end position="459"/>
    </location>
</feature>
<feature type="repeat" description="ARM 10">
    <location>
        <begin position="473"/>
        <end position="513"/>
    </location>
</feature>
<feature type="repeat" description="ARM 11">
    <location>
        <begin position="518"/>
        <end position="571"/>
    </location>
</feature>
<feature type="repeat" description="ARM 12">
    <location>
        <begin position="573"/>
        <end position="630"/>
    </location>
</feature>
<feature type="region of interest" description="Globular head">
    <location>
        <begin position="1"/>
        <end position="637"/>
    </location>
</feature>
<feature type="region of interest" description="Disordered" evidence="5">
    <location>
        <begin position="925"/>
        <end position="959"/>
    </location>
</feature>
<feature type="coiled-coil region" evidence="4">
    <location>
        <begin position="638"/>
        <end position="930"/>
    </location>
</feature>
<feature type="compositionally biased region" description="Acidic residues" evidence="5">
    <location>
        <begin position="935"/>
        <end position="959"/>
    </location>
</feature>
<feature type="modified residue" description="Phosphoserine" evidence="2">
    <location>
        <position position="50"/>
    </location>
</feature>
<feature type="modified residue" description="N6-acetyllysine" evidence="2">
    <location>
        <position position="202"/>
    </location>
</feature>
<feature type="modified residue" description="Phosphoserine" evidence="8 9">
    <location>
        <position position="940"/>
    </location>
</feature>
<feature type="splice variant" id="VSP_016978" description="In isoform 4." evidence="6">
    <location>
        <begin position="1"/>
        <end position="606"/>
    </location>
</feature>
<feature type="splice variant" id="VSP_016979" description="In isoform 3." evidence="6">
    <original>GSKIQTRVGLLM</original>
    <variation>VRATGLLRGERQ</variation>
    <location>
        <begin position="485"/>
        <end position="496"/>
    </location>
</feature>
<feature type="splice variant" id="VSP_016980" description="In isoform 3." evidence="6">
    <location>
        <begin position="497"/>
        <end position="959"/>
    </location>
</feature>
<feature type="splice variant" id="VSP_016981" description="In isoform 2." evidence="6">
    <location>
        <begin position="764"/>
        <end position="825"/>
    </location>
</feature>
<feature type="sequence conflict" description="In Ref. 3; AAC72967." evidence="7" ref="3">
    <original>G</original>
    <variation>R</variation>
    <location>
        <position position="225"/>
    </location>
</feature>
<feature type="sequence conflict" description="In Ref. 3; AAC72967." evidence="7" ref="3">
    <original>V</original>
    <variation>G</variation>
    <location>
        <position position="291"/>
    </location>
</feature>
<feature type="sequence conflict" description="In Ref. 3; AAC72967." evidence="7" ref="3">
    <original>QP</original>
    <variation>HA</variation>
    <location>
        <begin position="377"/>
        <end position="378"/>
    </location>
</feature>
<accession>Q9Z1Z0</accession>
<accession>Q3T9L9</accession>
<accession>Q3TH58</accession>
<accession>Q3U1C7</accession>
<accession>Q3UMW6</accession>
<accession>Q91WE7</accession>
<accession>Q99JZ5</accession>
<comment type="function">
    <text evidence="3">General vesicular transport factor required for intercisternal transport in the Golgi stack; it is required for transcytotic fusion and/or subsequent binding of the vesicles to the target membrane. May well act as a vesicular anchor by interacting with the target membrane and holding the vesicular and target membranes in proximity.</text>
</comment>
<comment type="subunit">
    <text evidence="1">Homodimer. Dimerizes by parallel association of the tails, resulting in an elongated structure with two globular head domains side by side, and a long rod-like tail structure. Interacts with MIF (By similarity).</text>
</comment>
<comment type="subcellular location">
    <subcellularLocation>
        <location evidence="1">Cytoplasm</location>
        <location evidence="1">Cytosol</location>
    </subcellularLocation>
    <subcellularLocation>
        <location evidence="1">Golgi apparatus membrane</location>
        <topology evidence="1">Peripheral membrane protein</topology>
    </subcellularLocation>
    <text evidence="1">Recycles between the cytosol and the Golgi apparatus during interphase.</text>
</comment>
<comment type="alternative products">
    <event type="alternative splicing"/>
    <isoform>
        <id>Q9Z1Z0-1</id>
        <name>1</name>
        <sequence type="displayed"/>
    </isoform>
    <isoform>
        <id>Q9Z1Z0-2</id>
        <name>2</name>
        <sequence type="described" ref="VSP_016981"/>
    </isoform>
    <isoform>
        <id>Q9Z1Z0-3</id>
        <name>3</name>
        <sequence type="described" ref="VSP_016979 VSP_016980"/>
    </isoform>
    <isoform>
        <id>Q9Z1Z0-4</id>
        <name>4</name>
        <sequence type="described" ref="VSP_016978"/>
    </isoform>
</comment>
<comment type="domain">
    <text>Composed of a globular head, an elongated tail (coiled-coil) and a highly acidic C-terminal domain.</text>
</comment>
<comment type="PTM">
    <text evidence="1">Phosphorylated in a cell cycle-specific manner; phosphorylated in interphase but not in mitotic cells. Dephosphorylated protein associates with the Golgi membrane; phosphorylation promostes dissociation (By similarity).</text>
</comment>
<comment type="similarity">
    <text evidence="7">Belongs to the VDP/USO1/EDE1 family.</text>
</comment>
<organism>
    <name type="scientific">Mus musculus</name>
    <name type="common">Mouse</name>
    <dbReference type="NCBI Taxonomy" id="10090"/>
    <lineage>
        <taxon>Eukaryota</taxon>
        <taxon>Metazoa</taxon>
        <taxon>Chordata</taxon>
        <taxon>Craniata</taxon>
        <taxon>Vertebrata</taxon>
        <taxon>Euteleostomi</taxon>
        <taxon>Mammalia</taxon>
        <taxon>Eutheria</taxon>
        <taxon>Euarchontoglires</taxon>
        <taxon>Glires</taxon>
        <taxon>Rodentia</taxon>
        <taxon>Myomorpha</taxon>
        <taxon>Muroidea</taxon>
        <taxon>Muridae</taxon>
        <taxon>Murinae</taxon>
        <taxon>Mus</taxon>
        <taxon>Mus</taxon>
    </lineage>
</organism>
<dbReference type="EMBL" id="AK144638">
    <property type="protein sequence ID" value="BAE25982.1"/>
    <property type="molecule type" value="mRNA"/>
</dbReference>
<dbReference type="EMBL" id="AK156070">
    <property type="protein sequence ID" value="BAE33571.1"/>
    <property type="molecule type" value="mRNA"/>
</dbReference>
<dbReference type="EMBL" id="AK168433">
    <property type="protein sequence ID" value="BAE40340.1"/>
    <property type="molecule type" value="mRNA"/>
</dbReference>
<dbReference type="EMBL" id="AK172425">
    <property type="protein sequence ID" value="BAE43001.1"/>
    <property type="molecule type" value="mRNA"/>
</dbReference>
<dbReference type="EMBL" id="BC005548">
    <property type="protein sequence ID" value="AAH05548.1"/>
    <property type="molecule type" value="mRNA"/>
</dbReference>
<dbReference type="EMBL" id="BC016069">
    <property type="protein sequence ID" value="AAH16069.1"/>
    <property type="molecule type" value="mRNA"/>
</dbReference>
<dbReference type="EMBL" id="AF096868">
    <property type="protein sequence ID" value="AAC72967.1"/>
    <property type="molecule type" value="mRNA"/>
</dbReference>
<dbReference type="CCDS" id="CCDS39150.1">
    <molecule id="Q9Z1Z0-1"/>
</dbReference>
<dbReference type="RefSeq" id="NP_001404556.1">
    <molecule id="Q9Z1Z0-2"/>
    <property type="nucleotide sequence ID" value="NM_001417627.1"/>
</dbReference>
<dbReference type="RefSeq" id="NP_001404557.1">
    <molecule id="Q9Z1Z0-4"/>
    <property type="nucleotide sequence ID" value="NM_001417628.1"/>
</dbReference>
<dbReference type="RefSeq" id="NP_062363.1">
    <molecule id="Q9Z1Z0-1"/>
    <property type="nucleotide sequence ID" value="NM_019490.2"/>
</dbReference>
<dbReference type="SMR" id="Q9Z1Z0"/>
<dbReference type="BioGRID" id="207788">
    <property type="interactions" value="123"/>
</dbReference>
<dbReference type="FunCoup" id="Q9Z1Z0">
    <property type="interactions" value="4017"/>
</dbReference>
<dbReference type="IntAct" id="Q9Z1Z0">
    <property type="interactions" value="110"/>
</dbReference>
<dbReference type="MINT" id="Q9Z1Z0"/>
<dbReference type="STRING" id="10090.ENSMUSP00000031355"/>
<dbReference type="GlyGen" id="Q9Z1Z0">
    <property type="glycosylation" value="1 site, 1 O-linked glycan (1 site)"/>
</dbReference>
<dbReference type="iPTMnet" id="Q9Z1Z0"/>
<dbReference type="PhosphoSitePlus" id="Q9Z1Z0"/>
<dbReference type="SwissPalm" id="Q9Z1Z0"/>
<dbReference type="jPOST" id="Q9Z1Z0"/>
<dbReference type="PaxDb" id="10090-ENSMUSP00000031355"/>
<dbReference type="PeptideAtlas" id="Q9Z1Z0"/>
<dbReference type="ProteomicsDB" id="299654">
    <molecule id="Q9Z1Z0-1"/>
</dbReference>
<dbReference type="ProteomicsDB" id="299655">
    <molecule id="Q9Z1Z0-2"/>
</dbReference>
<dbReference type="ProteomicsDB" id="299656">
    <molecule id="Q9Z1Z0-3"/>
</dbReference>
<dbReference type="ProteomicsDB" id="299657">
    <molecule id="Q9Z1Z0-4"/>
</dbReference>
<dbReference type="Pumba" id="Q9Z1Z0"/>
<dbReference type="Antibodypedia" id="4113">
    <property type="antibodies" value="379 antibodies from 38 providers"/>
</dbReference>
<dbReference type="DNASU" id="56041"/>
<dbReference type="Ensembl" id="ENSMUST00000031355.10">
    <molecule id="Q9Z1Z0-1"/>
    <property type="protein sequence ID" value="ENSMUSP00000031355.7"/>
    <property type="gene ID" value="ENSMUSG00000029407.11"/>
</dbReference>
<dbReference type="Ensembl" id="ENSMUST00000202155.2">
    <molecule id="Q9Z1Z0-2"/>
    <property type="protein sequence ID" value="ENSMUSP00000144592.2"/>
    <property type="gene ID" value="ENSMUSG00000029407.11"/>
</dbReference>
<dbReference type="GeneID" id="56041"/>
<dbReference type="KEGG" id="mmu:56041"/>
<dbReference type="UCSC" id="uc008ycl.1">
    <molecule id="Q9Z1Z0-3"/>
    <property type="organism name" value="mouse"/>
</dbReference>
<dbReference type="UCSC" id="uc008ycm.1">
    <molecule id="Q9Z1Z0-1"/>
    <property type="organism name" value="mouse"/>
</dbReference>
<dbReference type="UCSC" id="uc008ycn.1">
    <molecule id="Q9Z1Z0-4"/>
    <property type="organism name" value="mouse"/>
</dbReference>
<dbReference type="UCSC" id="uc012dyl.1">
    <molecule id="Q9Z1Z0-2"/>
    <property type="organism name" value="mouse"/>
</dbReference>
<dbReference type="AGR" id="MGI:1929095"/>
<dbReference type="CTD" id="8615"/>
<dbReference type="MGI" id="MGI:1929095">
    <property type="gene designation" value="Uso1"/>
</dbReference>
<dbReference type="VEuPathDB" id="HostDB:ENSMUSG00000029407"/>
<dbReference type="eggNOG" id="KOG0946">
    <property type="taxonomic scope" value="Eukaryota"/>
</dbReference>
<dbReference type="GeneTree" id="ENSGT00390000017018"/>
<dbReference type="InParanoid" id="Q9Z1Z0"/>
<dbReference type="OMA" id="GQETFCN"/>
<dbReference type="OrthoDB" id="198977at2759"/>
<dbReference type="PhylomeDB" id="Q9Z1Z0"/>
<dbReference type="TreeFam" id="TF106157"/>
<dbReference type="Reactome" id="R-MMU-204005">
    <property type="pathway name" value="COPII-mediated vesicle transport"/>
</dbReference>
<dbReference type="Reactome" id="R-MMU-6807878">
    <property type="pathway name" value="COPI-mediated anterograde transport"/>
</dbReference>
<dbReference type="BioGRID-ORCS" id="56041">
    <property type="hits" value="23 hits in 81 CRISPR screens"/>
</dbReference>
<dbReference type="ChiTaRS" id="Uso1">
    <property type="organism name" value="mouse"/>
</dbReference>
<dbReference type="PRO" id="PR:Q9Z1Z0"/>
<dbReference type="Proteomes" id="UP000000589">
    <property type="component" value="Chromosome 5"/>
</dbReference>
<dbReference type="RNAct" id="Q9Z1Z0">
    <property type="molecule type" value="protein"/>
</dbReference>
<dbReference type="Bgee" id="ENSMUSG00000029407">
    <property type="expression patterns" value="Expressed in prostate gland ventral lobe and 264 other cell types or tissues"/>
</dbReference>
<dbReference type="ExpressionAtlas" id="Q9Z1Z0">
    <property type="expression patterns" value="baseline and differential"/>
</dbReference>
<dbReference type="GO" id="GO:0005829">
    <property type="term" value="C:cytosol"/>
    <property type="evidence" value="ECO:0000314"/>
    <property type="project" value="MGI"/>
</dbReference>
<dbReference type="GO" id="GO:0001650">
    <property type="term" value="C:fibrillar center"/>
    <property type="evidence" value="ECO:0007669"/>
    <property type="project" value="Ensembl"/>
</dbReference>
<dbReference type="GO" id="GO:0000139">
    <property type="term" value="C:Golgi membrane"/>
    <property type="evidence" value="ECO:0007669"/>
    <property type="project" value="UniProtKB-SubCell"/>
</dbReference>
<dbReference type="GO" id="GO:0048471">
    <property type="term" value="C:perinuclear region of cytoplasm"/>
    <property type="evidence" value="ECO:0000314"/>
    <property type="project" value="MGI"/>
</dbReference>
<dbReference type="GO" id="GO:0006888">
    <property type="term" value="P:endoplasmic reticulum to Golgi vesicle-mediated transport"/>
    <property type="evidence" value="ECO:0000250"/>
    <property type="project" value="UniProtKB"/>
</dbReference>
<dbReference type="GO" id="GO:0007030">
    <property type="term" value="P:Golgi organization"/>
    <property type="evidence" value="ECO:0000315"/>
    <property type="project" value="MGI"/>
</dbReference>
<dbReference type="GO" id="GO:0006886">
    <property type="term" value="P:intracellular protein transport"/>
    <property type="evidence" value="ECO:0007669"/>
    <property type="project" value="InterPro"/>
</dbReference>
<dbReference type="GO" id="GO:1900076">
    <property type="term" value="P:regulation of cellular response to insulin stimulus"/>
    <property type="evidence" value="ECO:0000314"/>
    <property type="project" value="MGI"/>
</dbReference>
<dbReference type="GO" id="GO:0032252">
    <property type="term" value="P:secretory granule localization"/>
    <property type="evidence" value="ECO:0000314"/>
    <property type="project" value="MGI"/>
</dbReference>
<dbReference type="GO" id="GO:0007264">
    <property type="term" value="P:small GTPase-mediated signal transduction"/>
    <property type="evidence" value="ECO:0000314"/>
    <property type="project" value="MGI"/>
</dbReference>
<dbReference type="GO" id="GO:0048280">
    <property type="term" value="P:vesicle fusion with Golgi apparatus"/>
    <property type="evidence" value="ECO:0007669"/>
    <property type="project" value="InterPro"/>
</dbReference>
<dbReference type="FunFam" id="1.25.10.10:FF:000054">
    <property type="entry name" value="General vesicular transport factor p115"/>
    <property type="match status" value="1"/>
</dbReference>
<dbReference type="Gene3D" id="1.25.10.10">
    <property type="entry name" value="Leucine-rich Repeat Variant"/>
    <property type="match status" value="1"/>
</dbReference>
<dbReference type="InterPro" id="IPR011989">
    <property type="entry name" value="ARM-like"/>
</dbReference>
<dbReference type="InterPro" id="IPR016024">
    <property type="entry name" value="ARM-type_fold"/>
</dbReference>
<dbReference type="InterPro" id="IPR000225">
    <property type="entry name" value="Armadillo"/>
</dbReference>
<dbReference type="InterPro" id="IPR041209">
    <property type="entry name" value="P115_Arm_rpt"/>
</dbReference>
<dbReference type="InterPro" id="IPR006955">
    <property type="entry name" value="Uso1_p115_C"/>
</dbReference>
<dbReference type="InterPro" id="IPR024095">
    <property type="entry name" value="Vesicle_P115"/>
</dbReference>
<dbReference type="InterPro" id="IPR006953">
    <property type="entry name" value="Vesicle_Uso1_P115_head"/>
</dbReference>
<dbReference type="PANTHER" id="PTHR10013">
    <property type="entry name" value="GENERAL VESICULAR TRANSPORT FACTOR P115"/>
    <property type="match status" value="1"/>
</dbReference>
<dbReference type="PANTHER" id="PTHR10013:SF0">
    <property type="entry name" value="GENERAL VESICULAR TRANSPORT FACTOR P115"/>
    <property type="match status" value="1"/>
</dbReference>
<dbReference type="Pfam" id="PF18770">
    <property type="entry name" value="Arm_vescicular"/>
    <property type="match status" value="1"/>
</dbReference>
<dbReference type="Pfam" id="PF04871">
    <property type="entry name" value="Uso1_p115_C"/>
    <property type="match status" value="1"/>
</dbReference>
<dbReference type="Pfam" id="PF04869">
    <property type="entry name" value="Uso1_p115_head"/>
    <property type="match status" value="1"/>
</dbReference>
<dbReference type="SMART" id="SM00185">
    <property type="entry name" value="ARM"/>
    <property type="match status" value="3"/>
</dbReference>
<dbReference type="SUPFAM" id="SSF48371">
    <property type="entry name" value="ARM repeat"/>
    <property type="match status" value="1"/>
</dbReference>
<dbReference type="PROSITE" id="PS50176">
    <property type="entry name" value="ARM_REPEAT"/>
    <property type="match status" value="1"/>
</dbReference>
<gene>
    <name type="primary">Uso1</name>
    <name type="synonym">Vdp</name>
</gene>